<accession>P22853</accession>
<gene>
    <name type="primary">merR1</name>
    <name type="synonym">merR</name>
</gene>
<sequence>MKFRIGELADKCGVNKETIRYYERLGLIPEPERTEKGYRMYSQQTVDRLHFIKRMQELGFTLNEIDKLLGVVDRDEAKCRDMYDFTILKIEDIQRKIEDLKRIERMLMDLKERCPENKDIYECPIIETLMKK</sequence>
<feature type="chain" id="PRO_0000098135" description="Mercuric resistance operon regulatory protein">
    <location>
        <begin position="1"/>
        <end position="132"/>
    </location>
</feature>
<feature type="domain" description="HTH merR-type" evidence="1">
    <location>
        <begin position="2"/>
        <end position="71"/>
    </location>
</feature>
<feature type="DNA-binding region" description="H-T-H motif" evidence="1">
    <location>
        <begin position="5"/>
        <end position="24"/>
    </location>
</feature>
<feature type="binding site">
    <location>
        <position position="79"/>
    </location>
    <ligand>
        <name>Hg(2+)</name>
        <dbReference type="ChEBI" id="CHEBI:16793"/>
    </ligand>
</feature>
<feature type="binding site">
    <location>
        <position position="114"/>
    </location>
    <ligand>
        <name>Hg(2+)</name>
        <dbReference type="ChEBI" id="CHEBI:16793"/>
    </ligand>
</feature>
<feature type="binding site">
    <location>
        <position position="123"/>
    </location>
    <ligand>
        <name>Hg(2+)</name>
        <dbReference type="ChEBI" id="CHEBI:16793"/>
    </ligand>
</feature>
<feature type="mutagenesis site" description="Loss of mercury binding." evidence="2">
    <original>C</original>
    <variation>A</variation>
    <variation>H</variation>
    <location>
        <position position="79"/>
    </location>
</feature>
<feature type="mutagenesis site" description="Loss of mercury binding." evidence="2">
    <original>C</original>
    <variation>A</variation>
    <location>
        <position position="114"/>
    </location>
</feature>
<feature type="mutagenesis site" description="Loss of mercury binding." evidence="2">
    <original>C</original>
    <variation>A</variation>
    <variation>H</variation>
    <location>
        <position position="123"/>
    </location>
</feature>
<name>MERR_BACCE</name>
<proteinExistence type="evidence at protein level"/>
<keyword id="KW-0010">Activator</keyword>
<keyword id="KW-0238">DNA-binding</keyword>
<keyword id="KW-0475">Mercuric resistance</keyword>
<keyword id="KW-0476">Mercury</keyword>
<keyword id="KW-0479">Metal-binding</keyword>
<keyword id="KW-0678">Repressor</keyword>
<keyword id="KW-0804">Transcription</keyword>
<keyword id="KW-0805">Transcription regulation</keyword>
<keyword id="KW-0814">Transposable element</keyword>
<organism>
    <name type="scientific">Bacillus cereus</name>
    <dbReference type="NCBI Taxonomy" id="1396"/>
    <lineage>
        <taxon>Bacteria</taxon>
        <taxon>Bacillati</taxon>
        <taxon>Bacillota</taxon>
        <taxon>Bacilli</taxon>
        <taxon>Bacillales</taxon>
        <taxon>Bacillaceae</taxon>
        <taxon>Bacillus</taxon>
        <taxon>Bacillus cereus group</taxon>
    </lineage>
</organism>
<evidence type="ECO:0000255" key="1">
    <source>
        <dbReference type="PROSITE-ProRule" id="PRU00254"/>
    </source>
</evidence>
<evidence type="ECO:0000269" key="2">
    <source>
    </source>
</evidence>
<evidence type="ECO:0000269" key="3">
    <source>
    </source>
</evidence>
<reference key="1">
    <citation type="journal article" date="1989" name="J. Bacteriol.">
        <title>Nucleotide sequence of a chromosomal mercury resistance determinant from a Bacillus sp. with broad-spectrum mercury resistance.</title>
        <authorList>
            <person name="Wang Y."/>
            <person name="Moore M."/>
            <person name="Levinson H.S."/>
            <person name="Silver S."/>
            <person name="Walsh C.T."/>
            <person name="Mahler I."/>
        </authorList>
    </citation>
    <scope>NUCLEOTIDE SEQUENCE [GENOMIC DNA]</scope>
    <source>
        <strain>RC607</strain>
        <transposon>Tn5084</transposon>
    </source>
</reference>
<reference key="2">
    <citation type="journal article" date="1999" name="J. Bacteriol.">
        <title>Mercury resistance in Bacillus cereus RC607: transcriptional organization and two new open reading frames.</title>
        <authorList>
            <person name="Gupta A."/>
            <person name="Phung L.T."/>
            <person name="Chakravarty L."/>
            <person name="Silver S."/>
        </authorList>
    </citation>
    <scope>NUCLEOTIDE SEQUENCE [GENOMIC DNA]</scope>
    <source>
        <strain>RC607</strain>
        <transposon>Tn5084</transposon>
    </source>
</reference>
<reference key="3">
    <citation type="journal article" date="1989" name="J. Bacteriol.">
        <title>Homologous metalloregulatory proteins from both Gram-positive and Gram-negative bacteria control transcription of mercury resistance operons.</title>
        <authorList>
            <person name="Helmann J.D."/>
            <person name="Wang Y."/>
            <person name="Mahler I."/>
            <person name="Walsh C.T."/>
        </authorList>
    </citation>
    <scope>FUNCTION</scope>
</reference>
<reference key="4">
    <citation type="journal article" date="1990" name="Science">
        <title>The MerR metalloregulatory protein binds mercuric ion as a tricoordinate, metal-bridged dimer.</title>
        <authorList>
            <person name="Helmann J.D."/>
            <person name="Ballard B.T."/>
            <person name="Walsh C.T."/>
        </authorList>
    </citation>
    <scope>MUTAGENESIS</scope>
</reference>
<dbReference type="EMBL" id="AF138877">
    <property type="protein sequence ID" value="AAA83973.1"/>
    <property type="molecule type" value="Genomic_DNA"/>
</dbReference>
<dbReference type="EMBL" id="AB066362">
    <property type="protein sequence ID" value="BAB62429.1"/>
    <property type="molecule type" value="Genomic_DNA"/>
</dbReference>
<dbReference type="PIR" id="A32239">
    <property type="entry name" value="A32239"/>
</dbReference>
<dbReference type="RefSeq" id="WP_000672080.1">
    <property type="nucleotide sequence ID" value="NZ_VEGO01000042.1"/>
</dbReference>
<dbReference type="SMR" id="P22853"/>
<dbReference type="GeneID" id="92801533"/>
<dbReference type="GO" id="GO:0003677">
    <property type="term" value="F:DNA binding"/>
    <property type="evidence" value="ECO:0007669"/>
    <property type="project" value="UniProtKB-KW"/>
</dbReference>
<dbReference type="GO" id="GO:0003700">
    <property type="term" value="F:DNA-binding transcription factor activity"/>
    <property type="evidence" value="ECO:0007669"/>
    <property type="project" value="InterPro"/>
</dbReference>
<dbReference type="GO" id="GO:0045340">
    <property type="term" value="F:mercury ion binding"/>
    <property type="evidence" value="ECO:0007669"/>
    <property type="project" value="InterPro"/>
</dbReference>
<dbReference type="GO" id="GO:0046689">
    <property type="term" value="P:response to mercury ion"/>
    <property type="evidence" value="ECO:0007669"/>
    <property type="project" value="UniProtKB-KW"/>
</dbReference>
<dbReference type="CDD" id="cd04783">
    <property type="entry name" value="HTH_MerR1"/>
    <property type="match status" value="1"/>
</dbReference>
<dbReference type="Gene3D" id="1.10.1660.10">
    <property type="match status" value="1"/>
</dbReference>
<dbReference type="InterPro" id="IPR009061">
    <property type="entry name" value="DNA-bd_dom_put_sf"/>
</dbReference>
<dbReference type="InterPro" id="IPR011794">
    <property type="entry name" value="MerR"/>
</dbReference>
<dbReference type="InterPro" id="IPR000551">
    <property type="entry name" value="MerR-type_HTH_dom"/>
</dbReference>
<dbReference type="InterPro" id="IPR047057">
    <property type="entry name" value="MerR_fam"/>
</dbReference>
<dbReference type="NCBIfam" id="TIGR02051">
    <property type="entry name" value="MerR"/>
    <property type="match status" value="1"/>
</dbReference>
<dbReference type="PANTHER" id="PTHR30204:SF69">
    <property type="entry name" value="MERR-FAMILY TRANSCRIPTIONAL REGULATOR"/>
    <property type="match status" value="1"/>
</dbReference>
<dbReference type="PANTHER" id="PTHR30204">
    <property type="entry name" value="REDOX-CYCLING DRUG-SENSING TRANSCRIPTIONAL ACTIVATOR SOXR"/>
    <property type="match status" value="1"/>
</dbReference>
<dbReference type="Pfam" id="PF13411">
    <property type="entry name" value="MerR_1"/>
    <property type="match status" value="1"/>
</dbReference>
<dbReference type="PRINTS" id="PR00040">
    <property type="entry name" value="HTHMERR"/>
</dbReference>
<dbReference type="SMART" id="SM00422">
    <property type="entry name" value="HTH_MERR"/>
    <property type="match status" value="1"/>
</dbReference>
<dbReference type="SUPFAM" id="SSF46955">
    <property type="entry name" value="Putative DNA-binding domain"/>
    <property type="match status" value="1"/>
</dbReference>
<dbReference type="PROSITE" id="PS00552">
    <property type="entry name" value="HTH_MERR_1"/>
    <property type="match status" value="1"/>
</dbReference>
<dbReference type="PROSITE" id="PS50937">
    <property type="entry name" value="HTH_MERR_2"/>
    <property type="match status" value="1"/>
</dbReference>
<comment type="function">
    <text evidence="3">Mediates the mercuric-dependent induction of mercury resistance operon. In the absence of mercury MerR represses transcription by binding tightly to the mer operator region; when mercury is present the dimeric complex binds a single ion and becomes a potent transcriptional activator, while remaining bound to the mer site.</text>
</comment>
<comment type="subunit">
    <text>Homodimer.</text>
</comment>
<protein>
    <recommendedName>
        <fullName>Mercuric resistance operon regulatory protein</fullName>
    </recommendedName>
</protein>